<comment type="function">
    <text evidence="1">Catalyzes the ATP-dependent conversion of 7-carboxy-7-deazaguanine (CDG) to 7-cyano-7-deazaguanine (preQ(0)).</text>
</comment>
<comment type="catalytic activity">
    <reaction evidence="1">
        <text>7-carboxy-7-deazaguanine + NH4(+) + ATP = 7-cyano-7-deazaguanine + ADP + phosphate + H2O + H(+)</text>
        <dbReference type="Rhea" id="RHEA:27982"/>
        <dbReference type="ChEBI" id="CHEBI:15377"/>
        <dbReference type="ChEBI" id="CHEBI:15378"/>
        <dbReference type="ChEBI" id="CHEBI:28938"/>
        <dbReference type="ChEBI" id="CHEBI:30616"/>
        <dbReference type="ChEBI" id="CHEBI:43474"/>
        <dbReference type="ChEBI" id="CHEBI:45075"/>
        <dbReference type="ChEBI" id="CHEBI:61036"/>
        <dbReference type="ChEBI" id="CHEBI:456216"/>
        <dbReference type="EC" id="6.3.4.20"/>
    </reaction>
</comment>
<comment type="cofactor">
    <cofactor evidence="1">
        <name>Zn(2+)</name>
        <dbReference type="ChEBI" id="CHEBI:29105"/>
    </cofactor>
    <text evidence="1">Binds 1 zinc ion per subunit.</text>
</comment>
<comment type="pathway">
    <text evidence="1">Purine metabolism; 7-cyano-7-deazaguanine biosynthesis.</text>
</comment>
<comment type="similarity">
    <text evidence="1">Belongs to the QueC family.</text>
</comment>
<proteinExistence type="inferred from homology"/>
<reference key="1">
    <citation type="journal article" date="2007" name="J. Bacteriol.">
        <title>Genome sequence analysis of the emerging human pathogenic acetic acid bacterium Granulibacter bethesdensis.</title>
        <authorList>
            <person name="Greenberg D.E."/>
            <person name="Porcella S.F."/>
            <person name="Zelazny A.M."/>
            <person name="Virtaneva K."/>
            <person name="Sturdevant D.E."/>
            <person name="Kupko J.J. III"/>
            <person name="Barbian K.D."/>
            <person name="Babar A."/>
            <person name="Dorward D.W."/>
            <person name="Holland S.M."/>
        </authorList>
    </citation>
    <scope>NUCLEOTIDE SEQUENCE [LARGE SCALE GENOMIC DNA]</scope>
    <source>
        <strain>ATCC BAA-1260 / CGDNIH1</strain>
    </source>
</reference>
<accession>Q0BQ87</accession>
<name>QUEC_GRABC</name>
<protein>
    <recommendedName>
        <fullName evidence="1">7-cyano-7-deazaguanine synthase</fullName>
        <ecNumber evidence="1">6.3.4.20</ecNumber>
    </recommendedName>
    <alternativeName>
        <fullName evidence="1">7-cyano-7-carbaguanine synthase</fullName>
    </alternativeName>
    <alternativeName>
        <fullName evidence="1">PreQ(0) synthase</fullName>
    </alternativeName>
    <alternativeName>
        <fullName evidence="1">Queuosine biosynthesis protein QueC</fullName>
    </alternativeName>
</protein>
<gene>
    <name evidence="1" type="primary">queC</name>
    <name type="ordered locus">GbCGDNIH1_2116</name>
</gene>
<organism>
    <name type="scientific">Granulibacter bethesdensis (strain ATCC BAA-1260 / CGDNIH1)</name>
    <dbReference type="NCBI Taxonomy" id="391165"/>
    <lineage>
        <taxon>Bacteria</taxon>
        <taxon>Pseudomonadati</taxon>
        <taxon>Pseudomonadota</taxon>
        <taxon>Alphaproteobacteria</taxon>
        <taxon>Acetobacterales</taxon>
        <taxon>Acetobacteraceae</taxon>
        <taxon>Granulibacter</taxon>
    </lineage>
</organism>
<feature type="chain" id="PRO_0000336915" description="7-cyano-7-deazaguanine synthase">
    <location>
        <begin position="1"/>
        <end position="252"/>
    </location>
</feature>
<feature type="binding site" evidence="1">
    <location>
        <begin position="22"/>
        <end position="32"/>
    </location>
    <ligand>
        <name>ATP</name>
        <dbReference type="ChEBI" id="CHEBI:30616"/>
    </ligand>
</feature>
<feature type="binding site" evidence="1">
    <location>
        <position position="215"/>
    </location>
    <ligand>
        <name>Zn(2+)</name>
        <dbReference type="ChEBI" id="CHEBI:29105"/>
    </ligand>
</feature>
<feature type="binding site" evidence="1">
    <location>
        <position position="230"/>
    </location>
    <ligand>
        <name>Zn(2+)</name>
        <dbReference type="ChEBI" id="CHEBI:29105"/>
    </ligand>
</feature>
<feature type="binding site" evidence="1">
    <location>
        <position position="233"/>
    </location>
    <ligand>
        <name>Zn(2+)</name>
        <dbReference type="ChEBI" id="CHEBI:29105"/>
    </ligand>
</feature>
<feature type="binding site" evidence="1">
    <location>
        <position position="236"/>
    </location>
    <ligand>
        <name>Zn(2+)</name>
        <dbReference type="ChEBI" id="CHEBI:29105"/>
    </ligand>
</feature>
<keyword id="KW-0067">ATP-binding</keyword>
<keyword id="KW-0436">Ligase</keyword>
<keyword id="KW-0479">Metal-binding</keyword>
<keyword id="KW-0547">Nucleotide-binding</keyword>
<keyword id="KW-0671">Queuosine biosynthesis</keyword>
<keyword id="KW-1185">Reference proteome</keyword>
<keyword id="KW-0862">Zinc</keyword>
<dbReference type="EC" id="6.3.4.20" evidence="1"/>
<dbReference type="EMBL" id="CP000394">
    <property type="protein sequence ID" value="ABI63014.1"/>
    <property type="molecule type" value="Genomic_DNA"/>
</dbReference>
<dbReference type="RefSeq" id="WP_011632817.1">
    <property type="nucleotide sequence ID" value="NC_008343.2"/>
</dbReference>
<dbReference type="SMR" id="Q0BQ87"/>
<dbReference type="STRING" id="391165.GbCGDNIH1_2116"/>
<dbReference type="KEGG" id="gbe:GbCGDNIH1_2116"/>
<dbReference type="eggNOG" id="COG0603">
    <property type="taxonomic scope" value="Bacteria"/>
</dbReference>
<dbReference type="HOGENOM" id="CLU_081854_0_0_5"/>
<dbReference type="OrthoDB" id="9789567at2"/>
<dbReference type="UniPathway" id="UPA00391"/>
<dbReference type="Proteomes" id="UP000001963">
    <property type="component" value="Chromosome"/>
</dbReference>
<dbReference type="GO" id="GO:0005524">
    <property type="term" value="F:ATP binding"/>
    <property type="evidence" value="ECO:0007669"/>
    <property type="project" value="UniProtKB-UniRule"/>
</dbReference>
<dbReference type="GO" id="GO:0016879">
    <property type="term" value="F:ligase activity, forming carbon-nitrogen bonds"/>
    <property type="evidence" value="ECO:0007669"/>
    <property type="project" value="UniProtKB-UniRule"/>
</dbReference>
<dbReference type="GO" id="GO:0008270">
    <property type="term" value="F:zinc ion binding"/>
    <property type="evidence" value="ECO:0007669"/>
    <property type="project" value="UniProtKB-UniRule"/>
</dbReference>
<dbReference type="GO" id="GO:0008616">
    <property type="term" value="P:queuosine biosynthetic process"/>
    <property type="evidence" value="ECO:0007669"/>
    <property type="project" value="UniProtKB-UniRule"/>
</dbReference>
<dbReference type="CDD" id="cd01995">
    <property type="entry name" value="QueC-like"/>
    <property type="match status" value="1"/>
</dbReference>
<dbReference type="Gene3D" id="3.40.50.620">
    <property type="entry name" value="HUPs"/>
    <property type="match status" value="1"/>
</dbReference>
<dbReference type="HAMAP" id="MF_01633">
    <property type="entry name" value="QueC"/>
    <property type="match status" value="1"/>
</dbReference>
<dbReference type="InterPro" id="IPR018317">
    <property type="entry name" value="QueC"/>
</dbReference>
<dbReference type="InterPro" id="IPR014729">
    <property type="entry name" value="Rossmann-like_a/b/a_fold"/>
</dbReference>
<dbReference type="NCBIfam" id="TIGR00364">
    <property type="entry name" value="7-cyano-7-deazaguanine synthase QueC"/>
    <property type="match status" value="1"/>
</dbReference>
<dbReference type="PANTHER" id="PTHR42914">
    <property type="entry name" value="7-CYANO-7-DEAZAGUANINE SYNTHASE"/>
    <property type="match status" value="1"/>
</dbReference>
<dbReference type="PANTHER" id="PTHR42914:SF1">
    <property type="entry name" value="7-CYANO-7-DEAZAGUANINE SYNTHASE"/>
    <property type="match status" value="1"/>
</dbReference>
<dbReference type="Pfam" id="PF06508">
    <property type="entry name" value="QueC"/>
    <property type="match status" value="1"/>
</dbReference>
<dbReference type="PIRSF" id="PIRSF006293">
    <property type="entry name" value="ExsB"/>
    <property type="match status" value="1"/>
</dbReference>
<dbReference type="SUPFAM" id="SSF52402">
    <property type="entry name" value="Adenine nucleotide alpha hydrolases-like"/>
    <property type="match status" value="1"/>
</dbReference>
<evidence type="ECO:0000255" key="1">
    <source>
        <dbReference type="HAMAP-Rule" id="MF_01633"/>
    </source>
</evidence>
<sequence length="252" mass="27594">MIETKPIPGLALPRHDHALVLFSGGQDSTTCLAWALERFAHVETIGFTYGQRHSVEMECRGRVRQVLAHMSGRSGADWGSRLGDDHVLDLGNALHHVGQSALTGRSPIEIGQGGLPTSFVPGRNLIFLTYAAALGWRRGLRRMVGGMCETDYSGYPDCRDDTIKAMQLALNTGMEAHFVLETPLMWLTKAETWALADSLGGPALVALIEEETHTCYLGDRSQRHPWGYGCGECPACSLRAEGWREWQTASSA</sequence>